<comment type="similarity">
    <text evidence="1">Belongs to the UPF0434 family.</text>
</comment>
<name>Y959_HYDCU</name>
<organism>
    <name type="scientific">Hydrogenovibrio crunogenus (strain DSM 25203 / XCL-2)</name>
    <name type="common">Thiomicrospira crunogena</name>
    <dbReference type="NCBI Taxonomy" id="317025"/>
    <lineage>
        <taxon>Bacteria</taxon>
        <taxon>Pseudomonadati</taxon>
        <taxon>Pseudomonadota</taxon>
        <taxon>Gammaproteobacteria</taxon>
        <taxon>Thiotrichales</taxon>
        <taxon>Piscirickettsiaceae</taxon>
        <taxon>Hydrogenovibrio</taxon>
    </lineage>
</organism>
<reference key="1">
    <citation type="journal article" date="2006" name="PLoS Biol.">
        <title>The genome of deep-sea vent chemolithoautotroph Thiomicrospira crunogena XCL-2.</title>
        <authorList>
            <person name="Scott K.M."/>
            <person name="Sievert S.M."/>
            <person name="Abril F.N."/>
            <person name="Ball L.A."/>
            <person name="Barrett C.J."/>
            <person name="Blake R.A."/>
            <person name="Boller A.J."/>
            <person name="Chain P.S.G."/>
            <person name="Clark J.A."/>
            <person name="Davis C.R."/>
            <person name="Detter C."/>
            <person name="Do K.F."/>
            <person name="Dobrinski K.P."/>
            <person name="Faza B.I."/>
            <person name="Fitzpatrick K.A."/>
            <person name="Freyermuth S.K."/>
            <person name="Harmer T.L."/>
            <person name="Hauser L.J."/>
            <person name="Huegler M."/>
            <person name="Kerfeld C.A."/>
            <person name="Klotz M.G."/>
            <person name="Kong W.W."/>
            <person name="Land M."/>
            <person name="Lapidus A."/>
            <person name="Larimer F.W."/>
            <person name="Longo D.L."/>
            <person name="Lucas S."/>
            <person name="Malfatti S.A."/>
            <person name="Massey S.E."/>
            <person name="Martin D.D."/>
            <person name="McCuddin Z."/>
            <person name="Meyer F."/>
            <person name="Moore J.L."/>
            <person name="Ocampo L.H. Jr."/>
            <person name="Paul J.H."/>
            <person name="Paulsen I.T."/>
            <person name="Reep D.K."/>
            <person name="Ren Q."/>
            <person name="Ross R.L."/>
            <person name="Sato P.Y."/>
            <person name="Thomas P."/>
            <person name="Tinkham L.E."/>
            <person name="Zeruth G.T."/>
        </authorList>
    </citation>
    <scope>NUCLEOTIDE SEQUENCE [LARGE SCALE GENOMIC DNA]</scope>
    <source>
        <strain>DSM 25203 / XCL-2</strain>
    </source>
</reference>
<proteinExistence type="inferred from homology"/>
<dbReference type="EMBL" id="CP000109">
    <property type="protein sequence ID" value="ABB41554.1"/>
    <property type="molecule type" value="Genomic_DNA"/>
</dbReference>
<dbReference type="SMR" id="Q31H19"/>
<dbReference type="STRING" id="317025.Tcr_0959"/>
<dbReference type="KEGG" id="tcx:Tcr_0959"/>
<dbReference type="eggNOG" id="COG2835">
    <property type="taxonomic scope" value="Bacteria"/>
</dbReference>
<dbReference type="HOGENOM" id="CLU_155659_3_1_6"/>
<dbReference type="OrthoDB" id="9812205at2"/>
<dbReference type="GO" id="GO:0005829">
    <property type="term" value="C:cytosol"/>
    <property type="evidence" value="ECO:0007669"/>
    <property type="project" value="TreeGrafter"/>
</dbReference>
<dbReference type="FunFam" id="2.20.25.10:FF:000002">
    <property type="entry name" value="UPF0434 protein YcaR"/>
    <property type="match status" value="1"/>
</dbReference>
<dbReference type="Gene3D" id="2.20.25.10">
    <property type="match status" value="1"/>
</dbReference>
<dbReference type="HAMAP" id="MF_01187">
    <property type="entry name" value="UPF0434"/>
    <property type="match status" value="1"/>
</dbReference>
<dbReference type="InterPro" id="IPR005651">
    <property type="entry name" value="Trm112-like"/>
</dbReference>
<dbReference type="PANTHER" id="PTHR33505:SF4">
    <property type="entry name" value="PROTEIN PREY, MITOCHONDRIAL"/>
    <property type="match status" value="1"/>
</dbReference>
<dbReference type="PANTHER" id="PTHR33505">
    <property type="entry name" value="ZGC:162634"/>
    <property type="match status" value="1"/>
</dbReference>
<dbReference type="Pfam" id="PF03966">
    <property type="entry name" value="Trm112p"/>
    <property type="match status" value="1"/>
</dbReference>
<dbReference type="SUPFAM" id="SSF158997">
    <property type="entry name" value="Trm112p-like"/>
    <property type="match status" value="1"/>
</dbReference>
<sequence length="67" mass="7581">MDPKLLDILVCPVTKTPLQLDKAQQELISTAANLAFPVRDGIPIMLEEEARTLTAEEKERFMKQKRG</sequence>
<gene>
    <name type="ordered locus">Tcr_0959</name>
</gene>
<evidence type="ECO:0000255" key="1">
    <source>
        <dbReference type="HAMAP-Rule" id="MF_01187"/>
    </source>
</evidence>
<protein>
    <recommendedName>
        <fullName evidence="1">UPF0434 protein Tcr_0959</fullName>
    </recommendedName>
</protein>
<feature type="chain" id="PRO_0000291179" description="UPF0434 protein Tcr_0959">
    <location>
        <begin position="1"/>
        <end position="67"/>
    </location>
</feature>
<accession>Q31H19</accession>